<accession>P26569</accession>
<reference key="1">
    <citation type="journal article" date="1991" name="Eur. J. Biochem.">
        <title>Arabidopsis thaliana H1 histones. Analysis of two members of a small gene family.</title>
        <authorList>
            <person name="Gantt J.S."/>
            <person name="Lenvik T.R."/>
        </authorList>
    </citation>
    <scope>NUCLEOTIDE SEQUENCE [MRNA]</scope>
</reference>
<reference key="2">
    <citation type="journal article" date="1999" name="Nature">
        <title>Sequence and analysis of chromosome 2 of the plant Arabidopsis thaliana.</title>
        <authorList>
            <person name="Lin X."/>
            <person name="Kaul S."/>
            <person name="Rounsley S.D."/>
            <person name="Shea T.P."/>
            <person name="Benito M.-I."/>
            <person name="Town C.D."/>
            <person name="Fujii C.Y."/>
            <person name="Mason T.M."/>
            <person name="Bowman C.L."/>
            <person name="Barnstead M.E."/>
            <person name="Feldblyum T.V."/>
            <person name="Buell C.R."/>
            <person name="Ketchum K.A."/>
            <person name="Lee J.J."/>
            <person name="Ronning C.M."/>
            <person name="Koo H.L."/>
            <person name="Moffat K.S."/>
            <person name="Cronin L.A."/>
            <person name="Shen M."/>
            <person name="Pai G."/>
            <person name="Van Aken S."/>
            <person name="Umayam L."/>
            <person name="Tallon L.J."/>
            <person name="Gill J.E."/>
            <person name="Adams M.D."/>
            <person name="Carrera A.J."/>
            <person name="Creasy T.H."/>
            <person name="Goodman H.M."/>
            <person name="Somerville C.R."/>
            <person name="Copenhaver G.P."/>
            <person name="Preuss D."/>
            <person name="Nierman W.C."/>
            <person name="White O."/>
            <person name="Eisen J.A."/>
            <person name="Salzberg S.L."/>
            <person name="Fraser C.M."/>
            <person name="Venter J.C."/>
        </authorList>
    </citation>
    <scope>NUCLEOTIDE SEQUENCE [LARGE SCALE GENOMIC DNA]</scope>
    <source>
        <strain>cv. Columbia</strain>
    </source>
</reference>
<reference key="3">
    <citation type="journal article" date="2017" name="Plant J.">
        <title>Araport11: a complete reannotation of the Arabidopsis thaliana reference genome.</title>
        <authorList>
            <person name="Cheng C.Y."/>
            <person name="Krishnakumar V."/>
            <person name="Chan A.P."/>
            <person name="Thibaud-Nissen F."/>
            <person name="Schobel S."/>
            <person name="Town C.D."/>
        </authorList>
    </citation>
    <scope>GENOME REANNOTATION</scope>
    <source>
        <strain>cv. Columbia</strain>
    </source>
</reference>
<reference key="4">
    <citation type="journal article" date="2003" name="Science">
        <title>Empirical analysis of transcriptional activity in the Arabidopsis genome.</title>
        <authorList>
            <person name="Yamada K."/>
            <person name="Lim J."/>
            <person name="Dale J.M."/>
            <person name="Chen H."/>
            <person name="Shinn P."/>
            <person name="Palm C.J."/>
            <person name="Southwick A.M."/>
            <person name="Wu H.C."/>
            <person name="Kim C.J."/>
            <person name="Nguyen M."/>
            <person name="Pham P.K."/>
            <person name="Cheuk R.F."/>
            <person name="Karlin-Newmann G."/>
            <person name="Liu S.X."/>
            <person name="Lam B."/>
            <person name="Sakano H."/>
            <person name="Wu T."/>
            <person name="Yu G."/>
            <person name="Miranda M."/>
            <person name="Quach H.L."/>
            <person name="Tripp M."/>
            <person name="Chang C.H."/>
            <person name="Lee J.M."/>
            <person name="Toriumi M.J."/>
            <person name="Chan M.M."/>
            <person name="Tang C.C."/>
            <person name="Onodera C.S."/>
            <person name="Deng J.M."/>
            <person name="Akiyama K."/>
            <person name="Ansari Y."/>
            <person name="Arakawa T."/>
            <person name="Banh J."/>
            <person name="Banno F."/>
            <person name="Bowser L."/>
            <person name="Brooks S.Y."/>
            <person name="Carninci P."/>
            <person name="Chao Q."/>
            <person name="Choy N."/>
            <person name="Enju A."/>
            <person name="Goldsmith A.D."/>
            <person name="Gurjal M."/>
            <person name="Hansen N.F."/>
            <person name="Hayashizaki Y."/>
            <person name="Johnson-Hopson C."/>
            <person name="Hsuan V.W."/>
            <person name="Iida K."/>
            <person name="Karnes M."/>
            <person name="Khan S."/>
            <person name="Koesema E."/>
            <person name="Ishida J."/>
            <person name="Jiang P.X."/>
            <person name="Jones T."/>
            <person name="Kawai J."/>
            <person name="Kamiya A."/>
            <person name="Meyers C."/>
            <person name="Nakajima M."/>
            <person name="Narusaka M."/>
            <person name="Seki M."/>
            <person name="Sakurai T."/>
            <person name="Satou M."/>
            <person name="Tamse R."/>
            <person name="Vaysberg M."/>
            <person name="Wallender E.K."/>
            <person name="Wong C."/>
            <person name="Yamamura Y."/>
            <person name="Yuan S."/>
            <person name="Shinozaki K."/>
            <person name="Davis R.W."/>
            <person name="Theologis A."/>
            <person name="Ecker J.R."/>
        </authorList>
    </citation>
    <scope>NUCLEOTIDE SEQUENCE [LARGE SCALE MRNA]</scope>
    <source>
        <strain>cv. Columbia</strain>
    </source>
</reference>
<reference key="5">
    <citation type="submission" date="2002-03" db="EMBL/GenBank/DDBJ databases">
        <title>Full-length cDNA from Arabidopsis thaliana.</title>
        <authorList>
            <person name="Brover V.V."/>
            <person name="Troukhan M.E."/>
            <person name="Alexandrov N.A."/>
            <person name="Lu Y.-P."/>
            <person name="Flavell R.B."/>
            <person name="Feldmann K.A."/>
        </authorList>
    </citation>
    <scope>NUCLEOTIDE SEQUENCE [LARGE SCALE MRNA]</scope>
</reference>
<reference key="6">
    <citation type="journal article" date="2009" name="Plant J.">
        <title>Tandem affinity purification and mass spectrometric analysis of ubiquitylated proteins in Arabidopsis.</title>
        <authorList>
            <person name="Saracco S.A."/>
            <person name="Hansson M."/>
            <person name="Scalf M."/>
            <person name="Walker J.M."/>
            <person name="Smith L.M."/>
            <person name="Vierstra R.D."/>
        </authorList>
    </citation>
    <scope>UBIQUITINATION [LARGE SCALE ANALYSIS] AT LYS-156 AND LYS-165</scope>
    <scope>IDENTIFICATION BY MASS SPECTROMETRY</scope>
</reference>
<reference key="7">
    <citation type="journal article" date="2009" name="Plant Physiol.">
        <title>Large-scale Arabidopsis phosphoproteome profiling reveals novel chloroplast kinase substrates and phosphorylation networks.</title>
        <authorList>
            <person name="Reiland S."/>
            <person name="Messerli G."/>
            <person name="Baerenfaller K."/>
            <person name="Gerrits B."/>
            <person name="Endler A."/>
            <person name="Grossmann J."/>
            <person name="Gruissem W."/>
            <person name="Baginsky S."/>
        </authorList>
    </citation>
    <scope>PHOSPHORYLATION [LARGE SCALE ANALYSIS] AT SER-14</scope>
    <scope>IDENTIFICATION BY MASS SPECTROMETRY [LARGE SCALE ANALYSIS]</scope>
</reference>
<reference key="8">
    <citation type="journal article" date="2012" name="Mol. Cell. Proteomics">
        <title>Comparative large-scale characterisation of plant vs. mammal proteins reveals similar and idiosyncratic N-alpha acetylation features.</title>
        <authorList>
            <person name="Bienvenut W.V."/>
            <person name="Sumpton D."/>
            <person name="Martinez A."/>
            <person name="Lilla S."/>
            <person name="Espagne C."/>
            <person name="Meinnel T."/>
            <person name="Giglione C."/>
        </authorList>
    </citation>
    <scope>ACETYLATION [LARGE SCALE ANALYSIS] AT SER-2</scope>
    <scope>CLEAVAGE OF INITIATOR METHIONINE [LARGE SCALE ANALYSIS]</scope>
    <scope>IDENTIFICATION BY MASS SPECTROMETRY [LARGE SCALE ANALYSIS]</scope>
</reference>
<gene>
    <name type="ordered locus">At2g30620</name>
    <name type="ORF">T06B20.3</name>
</gene>
<feature type="initiator methionine" description="Removed" evidence="5">
    <location>
        <position position="1"/>
    </location>
</feature>
<feature type="chain" id="PRO_0000195950" description="Histone H1.2">
    <location>
        <begin position="2"/>
        <end position="273"/>
    </location>
</feature>
<feature type="domain" description="H15" evidence="1">
    <location>
        <begin position="61"/>
        <end position="130"/>
    </location>
</feature>
<feature type="region of interest" description="Disordered" evidence="2">
    <location>
        <begin position="1"/>
        <end position="63"/>
    </location>
</feature>
<feature type="region of interest" description="Disordered" evidence="2">
    <location>
        <begin position="193"/>
        <end position="273"/>
    </location>
</feature>
<feature type="compositionally biased region" description="Basic residues" evidence="2">
    <location>
        <begin position="33"/>
        <end position="59"/>
    </location>
</feature>
<feature type="compositionally biased region" description="Low complexity" evidence="2">
    <location>
        <begin position="193"/>
        <end position="216"/>
    </location>
</feature>
<feature type="compositionally biased region" description="Low complexity" evidence="2">
    <location>
        <begin position="237"/>
        <end position="256"/>
    </location>
</feature>
<feature type="compositionally biased region" description="Basic residues" evidence="2">
    <location>
        <begin position="257"/>
        <end position="273"/>
    </location>
</feature>
<feature type="modified residue" description="N-acetylserine" evidence="5">
    <location>
        <position position="2"/>
    </location>
</feature>
<feature type="modified residue" description="Phosphoserine" evidence="4">
    <location>
        <position position="14"/>
    </location>
</feature>
<feature type="cross-link" description="Glycyl lysine isopeptide (Lys-Gly) (interchain with G-Cter in ubiquitin)" evidence="3">
    <location>
        <position position="156"/>
    </location>
</feature>
<feature type="cross-link" description="Glycyl lysine isopeptide (Lys-Gly) (interchain with G-Cter in ubiquitin)" evidence="3">
    <location>
        <position position="165"/>
    </location>
</feature>
<dbReference type="EMBL" id="X62459">
    <property type="protein sequence ID" value="CAA44316.1"/>
    <property type="molecule type" value="mRNA"/>
</dbReference>
<dbReference type="EMBL" id="U93215">
    <property type="protein sequence ID" value="AAM15525.1"/>
    <property type="molecule type" value="Genomic_DNA"/>
</dbReference>
<dbReference type="EMBL" id="CP002685">
    <property type="protein sequence ID" value="AEC08419.1"/>
    <property type="molecule type" value="Genomic_DNA"/>
</dbReference>
<dbReference type="EMBL" id="AF360211">
    <property type="protein sequence ID" value="AAK25921.1"/>
    <property type="molecule type" value="mRNA"/>
</dbReference>
<dbReference type="EMBL" id="AY040059">
    <property type="protein sequence ID" value="AAK64117.1"/>
    <property type="molecule type" value="mRNA"/>
</dbReference>
<dbReference type="EMBL" id="AY085789">
    <property type="protein sequence ID" value="AAM63006.1"/>
    <property type="molecule type" value="mRNA"/>
</dbReference>
<dbReference type="PIR" id="S19699">
    <property type="entry name" value="HSMU12"/>
</dbReference>
<dbReference type="RefSeq" id="NP_180620.1">
    <molecule id="P26569-1"/>
    <property type="nucleotide sequence ID" value="NM_128614.4"/>
</dbReference>
<dbReference type="SMR" id="P26569"/>
<dbReference type="BioGRID" id="2961">
    <property type="interactions" value="2"/>
</dbReference>
<dbReference type="FunCoup" id="P26569">
    <property type="interactions" value="323"/>
</dbReference>
<dbReference type="STRING" id="3702.P26569"/>
<dbReference type="iPTMnet" id="P26569"/>
<dbReference type="PaxDb" id="3702-AT2G30620.1"/>
<dbReference type="ProteomicsDB" id="247280">
    <molecule id="P26569-1"/>
</dbReference>
<dbReference type="EnsemblPlants" id="AT2G30620.1">
    <molecule id="P26569-1"/>
    <property type="protein sequence ID" value="AT2G30620.1"/>
    <property type="gene ID" value="AT2G30620"/>
</dbReference>
<dbReference type="GeneID" id="817612"/>
<dbReference type="Gramene" id="AT2G30620.1">
    <molecule id="P26569-1"/>
    <property type="protein sequence ID" value="AT2G30620.1"/>
    <property type="gene ID" value="AT2G30620"/>
</dbReference>
<dbReference type="KEGG" id="ath:AT2G30620"/>
<dbReference type="Araport" id="AT2G30620"/>
<dbReference type="TAIR" id="AT2G30620">
    <property type="gene designation" value="H1.2"/>
</dbReference>
<dbReference type="eggNOG" id="ENOG502RXWQ">
    <property type="taxonomic scope" value="Eukaryota"/>
</dbReference>
<dbReference type="HOGENOM" id="CLU_052897_5_0_1"/>
<dbReference type="InParanoid" id="P26569"/>
<dbReference type="OMA" id="HKANLAP"/>
<dbReference type="CD-CODE" id="4299E36E">
    <property type="entry name" value="Nucleolus"/>
</dbReference>
<dbReference type="PRO" id="PR:P26569"/>
<dbReference type="Proteomes" id="UP000006548">
    <property type="component" value="Chromosome 2"/>
</dbReference>
<dbReference type="ExpressionAtlas" id="P26569">
    <property type="expression patterns" value="baseline and differential"/>
</dbReference>
<dbReference type="GO" id="GO:0005739">
    <property type="term" value="C:mitochondrion"/>
    <property type="evidence" value="ECO:0007005"/>
    <property type="project" value="TAIR"/>
</dbReference>
<dbReference type="GO" id="GO:0005730">
    <property type="term" value="C:nucleolus"/>
    <property type="evidence" value="ECO:0007005"/>
    <property type="project" value="TAIR"/>
</dbReference>
<dbReference type="GO" id="GO:0000786">
    <property type="term" value="C:nucleosome"/>
    <property type="evidence" value="ECO:0007669"/>
    <property type="project" value="InterPro"/>
</dbReference>
<dbReference type="GO" id="GO:0003677">
    <property type="term" value="F:DNA binding"/>
    <property type="evidence" value="ECO:0007669"/>
    <property type="project" value="UniProtKB-KW"/>
</dbReference>
<dbReference type="GO" id="GO:0030527">
    <property type="term" value="F:structural constituent of chromatin"/>
    <property type="evidence" value="ECO:0007669"/>
    <property type="project" value="InterPro"/>
</dbReference>
<dbReference type="GO" id="GO:0006334">
    <property type="term" value="P:nucleosome assembly"/>
    <property type="evidence" value="ECO:0007669"/>
    <property type="project" value="InterPro"/>
</dbReference>
<dbReference type="CDD" id="cd00073">
    <property type="entry name" value="H15"/>
    <property type="match status" value="1"/>
</dbReference>
<dbReference type="FunFam" id="1.10.10.10:FF:000521">
    <property type="entry name" value="Histone H1"/>
    <property type="match status" value="1"/>
</dbReference>
<dbReference type="Gene3D" id="1.10.10.10">
    <property type="entry name" value="Winged helix-like DNA-binding domain superfamily/Winged helix DNA-binding domain"/>
    <property type="match status" value="1"/>
</dbReference>
<dbReference type="InterPro" id="IPR005819">
    <property type="entry name" value="H1/H5"/>
</dbReference>
<dbReference type="InterPro" id="IPR005818">
    <property type="entry name" value="Histone_H1/H5_H15"/>
</dbReference>
<dbReference type="InterPro" id="IPR036388">
    <property type="entry name" value="WH-like_DNA-bd_sf"/>
</dbReference>
<dbReference type="InterPro" id="IPR036390">
    <property type="entry name" value="WH_DNA-bd_sf"/>
</dbReference>
<dbReference type="PANTHER" id="PTHR11467">
    <property type="entry name" value="HISTONE H1"/>
    <property type="match status" value="1"/>
</dbReference>
<dbReference type="PANTHER" id="PTHR11467:SF121">
    <property type="entry name" value="HISTONE H1.2"/>
    <property type="match status" value="1"/>
</dbReference>
<dbReference type="Pfam" id="PF00538">
    <property type="entry name" value="Linker_histone"/>
    <property type="match status" value="1"/>
</dbReference>
<dbReference type="PRINTS" id="PR00624">
    <property type="entry name" value="HISTONEH5"/>
</dbReference>
<dbReference type="SMART" id="SM00526">
    <property type="entry name" value="H15"/>
    <property type="match status" value="1"/>
</dbReference>
<dbReference type="SUPFAM" id="SSF46785">
    <property type="entry name" value="Winged helix' DNA-binding domain"/>
    <property type="match status" value="1"/>
</dbReference>
<dbReference type="PROSITE" id="PS51504">
    <property type="entry name" value="H15"/>
    <property type="match status" value="1"/>
</dbReference>
<comment type="function">
    <text>Histones H1 are necessary for the condensation of nucleosome chains into higher-order structures.</text>
</comment>
<comment type="subcellular location">
    <subcellularLocation>
        <location>Nucleus</location>
    </subcellularLocation>
    <subcellularLocation>
        <location>Chromosome</location>
    </subcellularLocation>
</comment>
<comment type="alternative products">
    <event type="alternative splicing"/>
    <isoform>
        <id>P26569-1</id>
        <name>1</name>
        <sequence type="displayed"/>
    </isoform>
    <text>A number of isoforms are produced. According to EST sequences.</text>
</comment>
<comment type="similarity">
    <text evidence="1">Belongs to the histone H1/H5 family.</text>
</comment>
<keyword id="KW-0007">Acetylation</keyword>
<keyword id="KW-0025">Alternative splicing</keyword>
<keyword id="KW-0158">Chromosome</keyword>
<keyword id="KW-0238">DNA-binding</keyword>
<keyword id="KW-1017">Isopeptide bond</keyword>
<keyword id="KW-0539">Nucleus</keyword>
<keyword id="KW-0597">Phosphoprotein</keyword>
<keyword id="KW-1185">Reference proteome</keyword>
<keyword id="KW-0832">Ubl conjugation</keyword>
<organism>
    <name type="scientific">Arabidopsis thaliana</name>
    <name type="common">Mouse-ear cress</name>
    <dbReference type="NCBI Taxonomy" id="3702"/>
    <lineage>
        <taxon>Eukaryota</taxon>
        <taxon>Viridiplantae</taxon>
        <taxon>Streptophyta</taxon>
        <taxon>Embryophyta</taxon>
        <taxon>Tracheophyta</taxon>
        <taxon>Spermatophyta</taxon>
        <taxon>Magnoliopsida</taxon>
        <taxon>eudicotyledons</taxon>
        <taxon>Gunneridae</taxon>
        <taxon>Pentapetalae</taxon>
        <taxon>rosids</taxon>
        <taxon>malvids</taxon>
        <taxon>Brassicales</taxon>
        <taxon>Brassicaceae</taxon>
        <taxon>Camelineae</taxon>
        <taxon>Arabidopsis</taxon>
    </lineage>
</organism>
<name>H12_ARATH</name>
<proteinExistence type="evidence at protein level"/>
<evidence type="ECO:0000255" key="1">
    <source>
        <dbReference type="PROSITE-ProRule" id="PRU00837"/>
    </source>
</evidence>
<evidence type="ECO:0000256" key="2">
    <source>
        <dbReference type="SAM" id="MobiDB-lite"/>
    </source>
</evidence>
<evidence type="ECO:0000269" key="3">
    <source>
    </source>
</evidence>
<evidence type="ECO:0007744" key="4">
    <source>
    </source>
</evidence>
<evidence type="ECO:0007744" key="5">
    <source>
    </source>
</evidence>
<protein>
    <recommendedName>
        <fullName>Histone H1.2</fullName>
    </recommendedName>
</protein>
<sequence>MSIEEENVPTTVDSGAADTTVKSPEKKPAAKGGKSKKTTTAKATKKPVKAAAPTKKKTTSSHPTYEEMIKDAIVTLKERTGSSQYAIQKFIEEKHKSLPPTFRKLLLVNLKRLVASEKLVKVKASFKIPSARSAATPKPAAPVKKKATVVAKPKGKVAAAVAPAKAKAAAKGTKKPAAKVVAKAKVTAKPKAKVTAAKPKSKSVAAVSKTKAVAAKPKAKERPAKASRTSTRTSPGKKVAAPAKKVAVTKKAPAKSVKVKSPAKRASTRKAKK</sequence>